<protein>
    <recommendedName>
        <fullName>Pentatricopeptide repeat-containing protein At2g19280</fullName>
    </recommendedName>
</protein>
<evidence type="ECO:0000305" key="1"/>
<proteinExistence type="evidence at transcript level"/>
<keyword id="KW-1185">Reference proteome</keyword>
<keyword id="KW-0677">Repeat</keyword>
<dbReference type="EMBL" id="AC003058">
    <property type="protein sequence ID" value="AAC16458.1"/>
    <property type="molecule type" value="Genomic_DNA"/>
</dbReference>
<dbReference type="EMBL" id="CP002685">
    <property type="protein sequence ID" value="AEC06863.1"/>
    <property type="molecule type" value="Genomic_DNA"/>
</dbReference>
<dbReference type="EMBL" id="CP002685">
    <property type="protein sequence ID" value="AEC06864.1"/>
    <property type="molecule type" value="Genomic_DNA"/>
</dbReference>
<dbReference type="EMBL" id="CP002685">
    <property type="protein sequence ID" value="ANM62931.1"/>
    <property type="molecule type" value="Genomic_DNA"/>
</dbReference>
<dbReference type="EMBL" id="CP002685">
    <property type="protein sequence ID" value="ANM62932.1"/>
    <property type="molecule type" value="Genomic_DNA"/>
</dbReference>
<dbReference type="EMBL" id="BT012576">
    <property type="protein sequence ID" value="AAS99720.1"/>
    <property type="molecule type" value="mRNA"/>
</dbReference>
<dbReference type="EMBL" id="AK221302">
    <property type="protein sequence ID" value="BAD94048.1"/>
    <property type="molecule type" value="mRNA"/>
</dbReference>
<dbReference type="EMBL" id="AK229469">
    <property type="protein sequence ID" value="BAF01327.1"/>
    <property type="molecule type" value="mRNA"/>
</dbReference>
<dbReference type="PIR" id="T01276">
    <property type="entry name" value="T01276"/>
</dbReference>
<dbReference type="RefSeq" id="NP_001189552.1">
    <property type="nucleotide sequence ID" value="NM_001202623.2"/>
</dbReference>
<dbReference type="RefSeq" id="NP_001325053.1">
    <property type="nucleotide sequence ID" value="NM_001335631.1"/>
</dbReference>
<dbReference type="RefSeq" id="NP_001325054.1">
    <property type="nucleotide sequence ID" value="NM_001335630.1"/>
</dbReference>
<dbReference type="RefSeq" id="NP_179518.1">
    <property type="nucleotide sequence ID" value="NM_127485.4"/>
</dbReference>
<dbReference type="SMR" id="Q6NKW7"/>
<dbReference type="FunCoup" id="Q6NKW7">
    <property type="interactions" value="57"/>
</dbReference>
<dbReference type="PaxDb" id="3702-AT2G19280.1"/>
<dbReference type="EnsemblPlants" id="AT2G19280.1">
    <property type="protein sequence ID" value="AT2G19280.1"/>
    <property type="gene ID" value="AT2G19280"/>
</dbReference>
<dbReference type="EnsemblPlants" id="AT2G19280.2">
    <property type="protein sequence ID" value="AT2G19280.2"/>
    <property type="gene ID" value="AT2G19280"/>
</dbReference>
<dbReference type="EnsemblPlants" id="AT2G19280.3">
    <property type="protein sequence ID" value="AT2G19280.3"/>
    <property type="gene ID" value="AT2G19280"/>
</dbReference>
<dbReference type="EnsemblPlants" id="AT2G19280.4">
    <property type="protein sequence ID" value="AT2G19280.4"/>
    <property type="gene ID" value="AT2G19280"/>
</dbReference>
<dbReference type="GeneID" id="816445"/>
<dbReference type="Gramene" id="AT2G19280.1">
    <property type="protein sequence ID" value="AT2G19280.1"/>
    <property type="gene ID" value="AT2G19280"/>
</dbReference>
<dbReference type="Gramene" id="AT2G19280.2">
    <property type="protein sequence ID" value="AT2G19280.2"/>
    <property type="gene ID" value="AT2G19280"/>
</dbReference>
<dbReference type="Gramene" id="AT2G19280.3">
    <property type="protein sequence ID" value="AT2G19280.3"/>
    <property type="gene ID" value="AT2G19280"/>
</dbReference>
<dbReference type="Gramene" id="AT2G19280.4">
    <property type="protein sequence ID" value="AT2G19280.4"/>
    <property type="gene ID" value="AT2G19280"/>
</dbReference>
<dbReference type="KEGG" id="ath:AT2G19280"/>
<dbReference type="Araport" id="AT2G19280"/>
<dbReference type="TAIR" id="AT2G19280"/>
<dbReference type="eggNOG" id="KOG4197">
    <property type="taxonomic scope" value="Eukaryota"/>
</dbReference>
<dbReference type="HOGENOM" id="CLU_002706_49_12_1"/>
<dbReference type="InParanoid" id="Q6NKW7"/>
<dbReference type="OMA" id="YFFRWSE"/>
<dbReference type="PhylomeDB" id="Q6NKW7"/>
<dbReference type="PRO" id="PR:Q6NKW7"/>
<dbReference type="Proteomes" id="UP000006548">
    <property type="component" value="Chromosome 2"/>
</dbReference>
<dbReference type="ExpressionAtlas" id="Q6NKW7">
    <property type="expression patterns" value="baseline and differential"/>
</dbReference>
<dbReference type="Gene3D" id="1.25.40.10">
    <property type="entry name" value="Tetratricopeptide repeat domain"/>
    <property type="match status" value="5"/>
</dbReference>
<dbReference type="InterPro" id="IPR002885">
    <property type="entry name" value="Pentatricopeptide_rpt"/>
</dbReference>
<dbReference type="InterPro" id="IPR011990">
    <property type="entry name" value="TPR-like_helical_dom_sf"/>
</dbReference>
<dbReference type="NCBIfam" id="TIGR00756">
    <property type="entry name" value="PPR"/>
    <property type="match status" value="8"/>
</dbReference>
<dbReference type="PANTHER" id="PTHR47941">
    <property type="entry name" value="PENTATRICOPEPTIDE REPEAT-CONTAINING PROTEIN 3, MITOCHONDRIAL"/>
    <property type="match status" value="1"/>
</dbReference>
<dbReference type="Pfam" id="PF01535">
    <property type="entry name" value="PPR"/>
    <property type="match status" value="2"/>
</dbReference>
<dbReference type="Pfam" id="PF13041">
    <property type="entry name" value="PPR_2"/>
    <property type="match status" value="5"/>
</dbReference>
<dbReference type="SUPFAM" id="SSF81901">
    <property type="entry name" value="HCP-like"/>
    <property type="match status" value="1"/>
</dbReference>
<dbReference type="PROSITE" id="PS51375">
    <property type="entry name" value="PPR"/>
    <property type="match status" value="13"/>
</dbReference>
<gene>
    <name type="ordered locus">At2g19280</name>
    <name type="ORF">F27F23.8</name>
</gene>
<reference key="1">
    <citation type="journal article" date="1999" name="Nature">
        <title>Sequence and analysis of chromosome 2 of the plant Arabidopsis thaliana.</title>
        <authorList>
            <person name="Lin X."/>
            <person name="Kaul S."/>
            <person name="Rounsley S.D."/>
            <person name="Shea T.P."/>
            <person name="Benito M.-I."/>
            <person name="Town C.D."/>
            <person name="Fujii C.Y."/>
            <person name="Mason T.M."/>
            <person name="Bowman C.L."/>
            <person name="Barnstead M.E."/>
            <person name="Feldblyum T.V."/>
            <person name="Buell C.R."/>
            <person name="Ketchum K.A."/>
            <person name="Lee J.J."/>
            <person name="Ronning C.M."/>
            <person name="Koo H.L."/>
            <person name="Moffat K.S."/>
            <person name="Cronin L.A."/>
            <person name="Shen M."/>
            <person name="Pai G."/>
            <person name="Van Aken S."/>
            <person name="Umayam L."/>
            <person name="Tallon L.J."/>
            <person name="Gill J.E."/>
            <person name="Adams M.D."/>
            <person name="Carrera A.J."/>
            <person name="Creasy T.H."/>
            <person name="Goodman H.M."/>
            <person name="Somerville C.R."/>
            <person name="Copenhaver G.P."/>
            <person name="Preuss D."/>
            <person name="Nierman W.C."/>
            <person name="White O."/>
            <person name="Eisen J.A."/>
            <person name="Salzberg S.L."/>
            <person name="Fraser C.M."/>
            <person name="Venter J.C."/>
        </authorList>
    </citation>
    <scope>NUCLEOTIDE SEQUENCE [LARGE SCALE GENOMIC DNA]</scope>
    <source>
        <strain>cv. Columbia</strain>
    </source>
</reference>
<reference key="2">
    <citation type="journal article" date="2017" name="Plant J.">
        <title>Araport11: a complete reannotation of the Arabidopsis thaliana reference genome.</title>
        <authorList>
            <person name="Cheng C.Y."/>
            <person name="Krishnakumar V."/>
            <person name="Chan A.P."/>
            <person name="Thibaud-Nissen F."/>
            <person name="Schobel S."/>
            <person name="Town C.D."/>
        </authorList>
    </citation>
    <scope>GENOME REANNOTATION</scope>
    <source>
        <strain>cv. Columbia</strain>
    </source>
</reference>
<reference key="3">
    <citation type="submission" date="2004-04" db="EMBL/GenBank/DDBJ databases">
        <title>Arabidopsis ORF clones.</title>
        <authorList>
            <person name="Shinn P."/>
            <person name="Chen H."/>
            <person name="Cheuk R.F."/>
            <person name="Kim C.J."/>
            <person name="Carninci P."/>
            <person name="Hayashizaki Y."/>
            <person name="Ishida J."/>
            <person name="Kamiya A."/>
            <person name="Kawai J."/>
            <person name="Narusaka M."/>
            <person name="Sakurai T."/>
            <person name="Satou M."/>
            <person name="Seki M."/>
            <person name="Shinozaki K."/>
            <person name="Ecker J.R."/>
        </authorList>
    </citation>
    <scope>NUCLEOTIDE SEQUENCE [LARGE SCALE MRNA]</scope>
    <source>
        <strain>cv. Columbia</strain>
    </source>
</reference>
<reference key="4">
    <citation type="submission" date="2006-07" db="EMBL/GenBank/DDBJ databases">
        <title>Large-scale analysis of RIKEN Arabidopsis full-length (RAFL) cDNAs.</title>
        <authorList>
            <person name="Totoki Y."/>
            <person name="Seki M."/>
            <person name="Ishida J."/>
            <person name="Nakajima M."/>
            <person name="Enju A."/>
            <person name="Kamiya A."/>
            <person name="Narusaka M."/>
            <person name="Shin-i T."/>
            <person name="Nakagawa M."/>
            <person name="Sakamoto N."/>
            <person name="Oishi K."/>
            <person name="Kohara Y."/>
            <person name="Kobayashi M."/>
            <person name="Toyoda A."/>
            <person name="Sakaki Y."/>
            <person name="Sakurai T."/>
            <person name="Iida K."/>
            <person name="Akiyama K."/>
            <person name="Satou M."/>
            <person name="Toyoda T."/>
            <person name="Konagaya A."/>
            <person name="Carninci P."/>
            <person name="Kawai J."/>
            <person name="Hayashizaki Y."/>
            <person name="Shinozaki K."/>
        </authorList>
    </citation>
    <scope>NUCLEOTIDE SEQUENCE [LARGE SCALE MRNA]</scope>
    <source>
        <strain>cv. Columbia</strain>
    </source>
</reference>
<reference key="5">
    <citation type="journal article" date="2004" name="Plant Cell">
        <title>Genome-wide analysis of Arabidopsis pentatricopeptide repeat proteins reveals their essential role in organelle biogenesis.</title>
        <authorList>
            <person name="Lurin C."/>
            <person name="Andres C."/>
            <person name="Aubourg S."/>
            <person name="Bellaoui M."/>
            <person name="Bitton F."/>
            <person name="Bruyere C."/>
            <person name="Caboche M."/>
            <person name="Debast C."/>
            <person name="Gualberto J."/>
            <person name="Hoffmann B."/>
            <person name="Lecharny A."/>
            <person name="Le Ret M."/>
            <person name="Martin-Magniette M.-L."/>
            <person name="Mireau H."/>
            <person name="Peeters N."/>
            <person name="Renou J.-P."/>
            <person name="Szurek B."/>
            <person name="Taconnat L."/>
            <person name="Small I."/>
        </authorList>
    </citation>
    <scope>GENE FAMILY</scope>
</reference>
<sequence length="693" mass="78751">MWVSIFNLKSSGLNHFCTRTKAFRYFWCRTFSLASLSENNSRFQTDSSRLPYSGSRYYHSSSKHFGEDFVSILKNIDVPRDCVETIRNVLVKHNWIQKYESGFSTELDQYTVIRILDDLFEETLDASIVLYFFRWSELWIGVEHSSRSISRMIHILVSGNMNYRAVDMLLCLVKKCSGEERSLCLVMKDLFETRIDRRVLETVFSILIDCCIRERKVNMALKLTYKVDQFGIFPSRGVCISLLKEILRVHGLELAREFVEHMLSRGRHLNAAVLSLFIRKYCSDGYFDKGWELLMGMKHYGIRPDIVAFTVFIDKLCKAGFLKEATSVLFKLKLFGISQDSVSVSSVIDGFCKVGKPEEAIKLIHSFRLRPNIFVYSSFLSNICSTGDMLRASTIFQEIFELGLLPDCVCYTTMIDGYCNLGRTDKAFQYFGALLKSGNPPSLTTSTILIGACSRFGSISDAESVFRNMKTEGLKLDVVTYNNLMHGYGKTHQLNKVFELIDEMRSAGISPDVATYNILIHSMVVRGYIDEANEIISELIRRGFVPSTLAFTDVIGGFSKRGDFQEAFILWFYMADLRMKPDVVTCSALLHGYCKAQRMEKAIVLFNKLLDAGLKPDVVLYNTLIHGYCSVGDIEKACELIGLMVQRGMLPNESTHHALVLGLEGKRFVNSETHASMLLEEIIVAKWHLTSGG</sequence>
<accession>Q6NKW7</accession>
<accession>O64561</accession>
<comment type="similarity">
    <text evidence="1">Belongs to the PPR family. P subfamily.</text>
</comment>
<comment type="online information" name="Pentatricopeptide repeat proteins">
    <link uri="https://ppr.plantenergy.uwa.edu.au"/>
</comment>
<name>PP164_ARATH</name>
<feature type="chain" id="PRO_0000356023" description="Pentatricopeptide repeat-containing protein At2g19280">
    <location>
        <begin position="1"/>
        <end position="693"/>
    </location>
</feature>
<feature type="repeat" description="PPR 1">
    <location>
        <begin position="200"/>
        <end position="234"/>
    </location>
</feature>
<feature type="repeat" description="PPR 2">
    <location>
        <begin position="235"/>
        <end position="269"/>
    </location>
</feature>
<feature type="repeat" description="PPR 3">
    <location>
        <begin position="270"/>
        <end position="304"/>
    </location>
</feature>
<feature type="repeat" description="PPR 4">
    <location>
        <begin position="305"/>
        <end position="339"/>
    </location>
</feature>
<feature type="repeat" description="PPR 5">
    <location>
        <begin position="340"/>
        <end position="370"/>
    </location>
</feature>
<feature type="repeat" description="PPR 6">
    <location>
        <begin position="372"/>
        <end position="406"/>
    </location>
</feature>
<feature type="repeat" description="PPR 7">
    <location>
        <begin position="407"/>
        <end position="441"/>
    </location>
</feature>
<feature type="repeat" description="PPR 8">
    <location>
        <begin position="442"/>
        <end position="476"/>
    </location>
</feature>
<feature type="repeat" description="PPR 9">
    <location>
        <begin position="477"/>
        <end position="511"/>
    </location>
</feature>
<feature type="repeat" description="PPR 10">
    <location>
        <begin position="512"/>
        <end position="546"/>
    </location>
</feature>
<feature type="repeat" description="PPR 11">
    <location>
        <begin position="547"/>
        <end position="581"/>
    </location>
</feature>
<feature type="repeat" description="PPR 12">
    <location>
        <begin position="582"/>
        <end position="616"/>
    </location>
</feature>
<feature type="repeat" description="PPR 13">
    <location>
        <begin position="617"/>
        <end position="651"/>
    </location>
</feature>
<feature type="sequence conflict" description="In Ref. 3; AAS99720 and 4; BAD94048/BAF01327." evidence="1" ref="3 4">
    <original>E</original>
    <variation>K</variation>
    <location>
        <position position="192"/>
    </location>
</feature>
<organism>
    <name type="scientific">Arabidopsis thaliana</name>
    <name type="common">Mouse-ear cress</name>
    <dbReference type="NCBI Taxonomy" id="3702"/>
    <lineage>
        <taxon>Eukaryota</taxon>
        <taxon>Viridiplantae</taxon>
        <taxon>Streptophyta</taxon>
        <taxon>Embryophyta</taxon>
        <taxon>Tracheophyta</taxon>
        <taxon>Spermatophyta</taxon>
        <taxon>Magnoliopsida</taxon>
        <taxon>eudicotyledons</taxon>
        <taxon>Gunneridae</taxon>
        <taxon>Pentapetalae</taxon>
        <taxon>rosids</taxon>
        <taxon>malvids</taxon>
        <taxon>Brassicales</taxon>
        <taxon>Brassicaceae</taxon>
        <taxon>Camelineae</taxon>
        <taxon>Arabidopsis</taxon>
    </lineage>
</organism>